<sequence length="236" mass="26424">MTKGQLLYEGKAKKLYTTEEPNVLLVEYKDSATAFNGEKKEEIEGKGILNNRITSLIFEKLQGNGIASHFVKQLSDTQQLVRKVDIIPIEVVVRNIVAGSLAKRIGLEEGTPLKRPIVEFYYKDDELGDPFITTEHIDVLELATSAEVSAIYDKALAINKVLQPIFADVNVTLIDFKLEFGRDADGHVLLADEISPDTCRLWDATTKQKLDKDVFRRDLGNLTEVYTIILSRLGGK</sequence>
<reference key="1">
    <citation type="journal article" date="2008" name="J. Bacteriol.">
        <title>Complete genome sequence of the mosquitocidal bacterium Bacillus sphaericus C3-41 and comparison with those of closely related Bacillus species.</title>
        <authorList>
            <person name="Hu X."/>
            <person name="Fan W."/>
            <person name="Han B."/>
            <person name="Liu H."/>
            <person name="Zheng D."/>
            <person name="Li Q."/>
            <person name="Dong W."/>
            <person name="Yan J."/>
            <person name="Gao M."/>
            <person name="Berry C."/>
            <person name="Yuan Z."/>
        </authorList>
    </citation>
    <scope>NUCLEOTIDE SEQUENCE [LARGE SCALE GENOMIC DNA]</scope>
    <source>
        <strain>C3-41</strain>
    </source>
</reference>
<gene>
    <name evidence="1" type="primary">purC</name>
    <name type="ordered locus">Bsph_0211</name>
</gene>
<feature type="chain" id="PRO_1000095993" description="Phosphoribosylaminoimidazole-succinocarboxamide synthase">
    <location>
        <begin position="1"/>
        <end position="236"/>
    </location>
</feature>
<keyword id="KW-0067">ATP-binding</keyword>
<keyword id="KW-0436">Ligase</keyword>
<keyword id="KW-0547">Nucleotide-binding</keyword>
<keyword id="KW-0658">Purine biosynthesis</keyword>
<comment type="catalytic activity">
    <reaction evidence="1">
        <text>5-amino-1-(5-phospho-D-ribosyl)imidazole-4-carboxylate + L-aspartate + ATP = (2S)-2-[5-amino-1-(5-phospho-beta-D-ribosyl)imidazole-4-carboxamido]succinate + ADP + phosphate + 2 H(+)</text>
        <dbReference type="Rhea" id="RHEA:22628"/>
        <dbReference type="ChEBI" id="CHEBI:15378"/>
        <dbReference type="ChEBI" id="CHEBI:29991"/>
        <dbReference type="ChEBI" id="CHEBI:30616"/>
        <dbReference type="ChEBI" id="CHEBI:43474"/>
        <dbReference type="ChEBI" id="CHEBI:58443"/>
        <dbReference type="ChEBI" id="CHEBI:77657"/>
        <dbReference type="ChEBI" id="CHEBI:456216"/>
        <dbReference type="EC" id="6.3.2.6"/>
    </reaction>
</comment>
<comment type="pathway">
    <text evidence="1">Purine metabolism; IMP biosynthesis via de novo pathway; 5-amino-1-(5-phospho-D-ribosyl)imidazole-4-carboxamide from 5-amino-1-(5-phospho-D-ribosyl)imidazole-4-carboxylate: step 1/2.</text>
</comment>
<comment type="similarity">
    <text evidence="1">Belongs to the SAICAR synthetase family.</text>
</comment>
<protein>
    <recommendedName>
        <fullName evidence="1">Phosphoribosylaminoimidazole-succinocarboxamide synthase</fullName>
        <ecNumber evidence="1">6.3.2.6</ecNumber>
    </recommendedName>
    <alternativeName>
        <fullName evidence="1">SAICAR synthetase</fullName>
    </alternativeName>
</protein>
<dbReference type="EC" id="6.3.2.6" evidence="1"/>
<dbReference type="EMBL" id="CP000817">
    <property type="protein sequence ID" value="ACA37842.1"/>
    <property type="molecule type" value="Genomic_DNA"/>
</dbReference>
<dbReference type="RefSeq" id="WP_012292011.1">
    <property type="nucleotide sequence ID" value="NC_010382.1"/>
</dbReference>
<dbReference type="SMR" id="B1HTV1"/>
<dbReference type="EnsemblBacteria" id="ACA37842">
    <property type="protein sequence ID" value="ACA37842"/>
    <property type="gene ID" value="Bsph_0211"/>
</dbReference>
<dbReference type="KEGG" id="lsp:Bsph_0211"/>
<dbReference type="HOGENOM" id="CLU_061495_2_0_9"/>
<dbReference type="UniPathway" id="UPA00074">
    <property type="reaction ID" value="UER00131"/>
</dbReference>
<dbReference type="Proteomes" id="UP000002164">
    <property type="component" value="Chromosome"/>
</dbReference>
<dbReference type="GO" id="GO:0005524">
    <property type="term" value="F:ATP binding"/>
    <property type="evidence" value="ECO:0007669"/>
    <property type="project" value="UniProtKB-KW"/>
</dbReference>
<dbReference type="GO" id="GO:0004639">
    <property type="term" value="F:phosphoribosylaminoimidazolesuccinocarboxamide synthase activity"/>
    <property type="evidence" value="ECO:0007669"/>
    <property type="project" value="UniProtKB-UniRule"/>
</dbReference>
<dbReference type="GO" id="GO:0006189">
    <property type="term" value="P:'de novo' IMP biosynthetic process"/>
    <property type="evidence" value="ECO:0007669"/>
    <property type="project" value="UniProtKB-UniRule"/>
</dbReference>
<dbReference type="GO" id="GO:0009236">
    <property type="term" value="P:cobalamin biosynthetic process"/>
    <property type="evidence" value="ECO:0007669"/>
    <property type="project" value="InterPro"/>
</dbReference>
<dbReference type="CDD" id="cd01415">
    <property type="entry name" value="SAICAR_synt_PurC"/>
    <property type="match status" value="1"/>
</dbReference>
<dbReference type="FunFam" id="3.30.200.20:FF:000189">
    <property type="entry name" value="Phosphoribosylaminoimidazole-succinocarboxamide synthase"/>
    <property type="match status" value="1"/>
</dbReference>
<dbReference type="FunFam" id="3.30.470.20:FF:000006">
    <property type="entry name" value="Phosphoribosylaminoimidazole-succinocarboxamide synthase"/>
    <property type="match status" value="1"/>
</dbReference>
<dbReference type="Gene3D" id="3.30.470.20">
    <property type="entry name" value="ATP-grasp fold, B domain"/>
    <property type="match status" value="1"/>
</dbReference>
<dbReference type="Gene3D" id="3.30.200.20">
    <property type="entry name" value="Phosphorylase Kinase, domain 1"/>
    <property type="match status" value="1"/>
</dbReference>
<dbReference type="HAMAP" id="MF_00137">
    <property type="entry name" value="SAICAR_synth"/>
    <property type="match status" value="1"/>
</dbReference>
<dbReference type="InterPro" id="IPR028923">
    <property type="entry name" value="SAICAR_synt/ADE2_N"/>
</dbReference>
<dbReference type="InterPro" id="IPR033934">
    <property type="entry name" value="SAICAR_synt_PurC"/>
</dbReference>
<dbReference type="InterPro" id="IPR001636">
    <property type="entry name" value="SAICAR_synth"/>
</dbReference>
<dbReference type="InterPro" id="IPR050089">
    <property type="entry name" value="SAICAR_synthetase"/>
</dbReference>
<dbReference type="InterPro" id="IPR018236">
    <property type="entry name" value="SAICAR_synthetase_CS"/>
</dbReference>
<dbReference type="NCBIfam" id="TIGR00081">
    <property type="entry name" value="purC"/>
    <property type="match status" value="1"/>
</dbReference>
<dbReference type="PANTHER" id="PTHR43599">
    <property type="entry name" value="MULTIFUNCTIONAL PROTEIN ADE2"/>
    <property type="match status" value="1"/>
</dbReference>
<dbReference type="PANTHER" id="PTHR43599:SF3">
    <property type="entry name" value="SI:DKEY-6E2.2"/>
    <property type="match status" value="1"/>
</dbReference>
<dbReference type="Pfam" id="PF01259">
    <property type="entry name" value="SAICAR_synt"/>
    <property type="match status" value="1"/>
</dbReference>
<dbReference type="SUPFAM" id="SSF56104">
    <property type="entry name" value="SAICAR synthase-like"/>
    <property type="match status" value="1"/>
</dbReference>
<dbReference type="PROSITE" id="PS01057">
    <property type="entry name" value="SAICAR_SYNTHETASE_1"/>
    <property type="match status" value="1"/>
</dbReference>
<dbReference type="PROSITE" id="PS01058">
    <property type="entry name" value="SAICAR_SYNTHETASE_2"/>
    <property type="match status" value="1"/>
</dbReference>
<proteinExistence type="inferred from homology"/>
<evidence type="ECO:0000255" key="1">
    <source>
        <dbReference type="HAMAP-Rule" id="MF_00137"/>
    </source>
</evidence>
<name>PUR7_LYSSC</name>
<accession>B1HTV1</accession>
<organism>
    <name type="scientific">Lysinibacillus sphaericus (strain C3-41)</name>
    <dbReference type="NCBI Taxonomy" id="444177"/>
    <lineage>
        <taxon>Bacteria</taxon>
        <taxon>Bacillati</taxon>
        <taxon>Bacillota</taxon>
        <taxon>Bacilli</taxon>
        <taxon>Bacillales</taxon>
        <taxon>Bacillaceae</taxon>
        <taxon>Lysinibacillus</taxon>
    </lineage>
</organism>